<name>RL11_MALP2</name>
<reference key="1">
    <citation type="journal article" date="2002" name="Nucleic Acids Res.">
        <title>The complete genomic sequence of Mycoplasma penetrans, an intracellular bacterial pathogen in humans.</title>
        <authorList>
            <person name="Sasaki Y."/>
            <person name="Ishikawa J."/>
            <person name="Yamashita A."/>
            <person name="Oshima K."/>
            <person name="Kenri T."/>
            <person name="Furuya K."/>
            <person name="Yoshino C."/>
            <person name="Horino A."/>
            <person name="Shiba T."/>
            <person name="Sasaki T."/>
            <person name="Hattori M."/>
        </authorList>
    </citation>
    <scope>NUCLEOTIDE SEQUENCE [LARGE SCALE GENOMIC DNA]</scope>
    <source>
        <strain>HF-2</strain>
    </source>
</reference>
<feature type="chain" id="PRO_0000104322" description="Large ribosomal subunit protein uL11">
    <location>
        <begin position="1"/>
        <end position="155"/>
    </location>
</feature>
<accession>Q8EX25</accession>
<keyword id="KW-0488">Methylation</keyword>
<keyword id="KW-1185">Reference proteome</keyword>
<keyword id="KW-0687">Ribonucleoprotein</keyword>
<keyword id="KW-0689">Ribosomal protein</keyword>
<keyword id="KW-0694">RNA-binding</keyword>
<keyword id="KW-0699">rRNA-binding</keyword>
<organism>
    <name type="scientific">Malacoplasma penetrans (strain HF-2)</name>
    <name type="common">Mycoplasma penetrans</name>
    <dbReference type="NCBI Taxonomy" id="272633"/>
    <lineage>
        <taxon>Bacteria</taxon>
        <taxon>Bacillati</taxon>
        <taxon>Mycoplasmatota</taxon>
        <taxon>Mycoplasmoidales</taxon>
        <taxon>Mycoplasmoidaceae</taxon>
        <taxon>Malacoplasma</taxon>
    </lineage>
</organism>
<gene>
    <name evidence="1" type="primary">rplK</name>
    <name type="ordered locus">MYPE250</name>
</gene>
<evidence type="ECO:0000255" key="1">
    <source>
        <dbReference type="HAMAP-Rule" id="MF_00736"/>
    </source>
</evidence>
<evidence type="ECO:0000305" key="2"/>
<protein>
    <recommendedName>
        <fullName evidence="1">Large ribosomal subunit protein uL11</fullName>
    </recommendedName>
    <alternativeName>
        <fullName evidence="2">50S ribosomal protein L11</fullName>
    </alternativeName>
</protein>
<proteinExistence type="inferred from homology"/>
<dbReference type="EMBL" id="BA000026">
    <property type="protein sequence ID" value="BAC43815.1"/>
    <property type="molecule type" value="Genomic_DNA"/>
</dbReference>
<dbReference type="RefSeq" id="WP_011076851.1">
    <property type="nucleotide sequence ID" value="NC_004432.1"/>
</dbReference>
<dbReference type="SMR" id="Q8EX25"/>
<dbReference type="FunCoup" id="Q8EX25">
    <property type="interactions" value="269"/>
</dbReference>
<dbReference type="STRING" id="272633.gene:10731116"/>
<dbReference type="KEGG" id="mpe:MYPE250"/>
<dbReference type="eggNOG" id="COG0080">
    <property type="taxonomic scope" value="Bacteria"/>
</dbReference>
<dbReference type="HOGENOM" id="CLU_074237_2_2_14"/>
<dbReference type="InParanoid" id="Q8EX25"/>
<dbReference type="Proteomes" id="UP000002522">
    <property type="component" value="Chromosome"/>
</dbReference>
<dbReference type="GO" id="GO:0022625">
    <property type="term" value="C:cytosolic large ribosomal subunit"/>
    <property type="evidence" value="ECO:0007669"/>
    <property type="project" value="TreeGrafter"/>
</dbReference>
<dbReference type="GO" id="GO:0070180">
    <property type="term" value="F:large ribosomal subunit rRNA binding"/>
    <property type="evidence" value="ECO:0007669"/>
    <property type="project" value="UniProtKB-UniRule"/>
</dbReference>
<dbReference type="GO" id="GO:0003735">
    <property type="term" value="F:structural constituent of ribosome"/>
    <property type="evidence" value="ECO:0007669"/>
    <property type="project" value="InterPro"/>
</dbReference>
<dbReference type="GO" id="GO:0006412">
    <property type="term" value="P:translation"/>
    <property type="evidence" value="ECO:0007669"/>
    <property type="project" value="UniProtKB-UniRule"/>
</dbReference>
<dbReference type="CDD" id="cd00349">
    <property type="entry name" value="Ribosomal_L11"/>
    <property type="match status" value="1"/>
</dbReference>
<dbReference type="Gene3D" id="1.10.10.250">
    <property type="entry name" value="Ribosomal protein L11, C-terminal domain"/>
    <property type="match status" value="1"/>
</dbReference>
<dbReference type="Gene3D" id="3.30.1550.10">
    <property type="entry name" value="Ribosomal protein L11/L12, N-terminal domain"/>
    <property type="match status" value="1"/>
</dbReference>
<dbReference type="HAMAP" id="MF_00736">
    <property type="entry name" value="Ribosomal_uL11"/>
    <property type="match status" value="1"/>
</dbReference>
<dbReference type="InterPro" id="IPR000911">
    <property type="entry name" value="Ribosomal_uL11"/>
</dbReference>
<dbReference type="InterPro" id="IPR006519">
    <property type="entry name" value="Ribosomal_uL11_bac-typ"/>
</dbReference>
<dbReference type="InterPro" id="IPR020783">
    <property type="entry name" value="Ribosomal_uL11_C"/>
</dbReference>
<dbReference type="InterPro" id="IPR036769">
    <property type="entry name" value="Ribosomal_uL11_C_sf"/>
</dbReference>
<dbReference type="InterPro" id="IPR020785">
    <property type="entry name" value="Ribosomal_uL11_CS"/>
</dbReference>
<dbReference type="InterPro" id="IPR020784">
    <property type="entry name" value="Ribosomal_uL11_N"/>
</dbReference>
<dbReference type="InterPro" id="IPR036796">
    <property type="entry name" value="Ribosomal_uL11_N_sf"/>
</dbReference>
<dbReference type="NCBIfam" id="TIGR01632">
    <property type="entry name" value="L11_bact"/>
    <property type="match status" value="1"/>
</dbReference>
<dbReference type="PANTHER" id="PTHR11661">
    <property type="entry name" value="60S RIBOSOMAL PROTEIN L12"/>
    <property type="match status" value="1"/>
</dbReference>
<dbReference type="PANTHER" id="PTHR11661:SF1">
    <property type="entry name" value="LARGE RIBOSOMAL SUBUNIT PROTEIN UL11M"/>
    <property type="match status" value="1"/>
</dbReference>
<dbReference type="Pfam" id="PF00298">
    <property type="entry name" value="Ribosomal_L11"/>
    <property type="match status" value="1"/>
</dbReference>
<dbReference type="Pfam" id="PF03946">
    <property type="entry name" value="Ribosomal_L11_N"/>
    <property type="match status" value="1"/>
</dbReference>
<dbReference type="SMART" id="SM00649">
    <property type="entry name" value="RL11"/>
    <property type="match status" value="1"/>
</dbReference>
<dbReference type="SUPFAM" id="SSF54747">
    <property type="entry name" value="Ribosomal L11/L12e N-terminal domain"/>
    <property type="match status" value="1"/>
</dbReference>
<dbReference type="SUPFAM" id="SSF46906">
    <property type="entry name" value="Ribosomal protein L11, C-terminal domain"/>
    <property type="match status" value="1"/>
</dbReference>
<dbReference type="PROSITE" id="PS00359">
    <property type="entry name" value="RIBOSOMAL_L11"/>
    <property type="match status" value="1"/>
</dbReference>
<sequence>MLLVAFKDPRITRIAKVNLIGGQAKPGPQLASIGINMGEFTKQFNDQTKDKNGEVIPCIITAFKDKSFTFEIKTTPVTMLLKKAANIKVGAKNSKTETVATISREKALEIAKTKLVDTNANDEEAVLRMVAGSAKQMGIKIEGVDPVVHKDGKKK</sequence>
<comment type="function">
    <text evidence="1">Forms part of the ribosomal stalk which helps the ribosome interact with GTP-bound translation factors.</text>
</comment>
<comment type="subunit">
    <text evidence="1">Part of the ribosomal stalk of the 50S ribosomal subunit. Interacts with L10 and the large rRNA to form the base of the stalk. L10 forms an elongated spine to which L12 dimers bind in a sequential fashion forming a multimeric L10(L12)X complex.</text>
</comment>
<comment type="PTM">
    <text evidence="1">One or more lysine residues are methylated.</text>
</comment>
<comment type="similarity">
    <text evidence="1">Belongs to the universal ribosomal protein uL11 family.</text>
</comment>